<keyword id="KW-0472">Membrane</keyword>
<keyword id="KW-0496">Mitochondrion</keyword>
<keyword id="KW-1000">Mitochondrion outer membrane</keyword>
<keyword id="KW-1185">Reference proteome</keyword>
<keyword id="KW-0677">Repeat</keyword>
<keyword id="KW-0812">Transmembrane</keyword>
<keyword id="KW-1133">Transmembrane helix</keyword>
<keyword id="KW-0813">Transport</keyword>
<accession>Q6INQ6</accession>
<organism>
    <name type="scientific">Xenopus laevis</name>
    <name type="common">African clawed frog</name>
    <dbReference type="NCBI Taxonomy" id="8355"/>
    <lineage>
        <taxon>Eukaryota</taxon>
        <taxon>Metazoa</taxon>
        <taxon>Chordata</taxon>
        <taxon>Craniata</taxon>
        <taxon>Vertebrata</taxon>
        <taxon>Euteleostomi</taxon>
        <taxon>Amphibia</taxon>
        <taxon>Batrachia</taxon>
        <taxon>Anura</taxon>
        <taxon>Pipoidea</taxon>
        <taxon>Pipidae</taxon>
        <taxon>Xenopodinae</taxon>
        <taxon>Xenopus</taxon>
        <taxon>Xenopus</taxon>
    </lineage>
</organism>
<dbReference type="EMBL" id="BC072218">
    <property type="protein sequence ID" value="AAH72218.1"/>
    <property type="molecule type" value="mRNA"/>
</dbReference>
<dbReference type="RefSeq" id="NP_001085164.1">
    <property type="nucleotide sequence ID" value="NM_001091695.1"/>
</dbReference>
<dbReference type="DNASU" id="432247"/>
<dbReference type="GeneID" id="432247"/>
<dbReference type="KEGG" id="xla:432247"/>
<dbReference type="AGR" id="Xenbase:XB-GENE-6255737"/>
<dbReference type="CTD" id="432247"/>
<dbReference type="Xenbase" id="XB-GENE-6255737">
    <property type="gene designation" value="slc25a46.S"/>
</dbReference>
<dbReference type="OrthoDB" id="2403262at2759"/>
<dbReference type="Proteomes" id="UP000186698">
    <property type="component" value="Chromosome 1S"/>
</dbReference>
<dbReference type="Bgee" id="432247">
    <property type="expression patterns" value="Expressed in ovary and 19 other cell types or tissues"/>
</dbReference>
<dbReference type="GO" id="GO:0005741">
    <property type="term" value="C:mitochondrial outer membrane"/>
    <property type="evidence" value="ECO:0000250"/>
    <property type="project" value="UniProtKB"/>
</dbReference>
<dbReference type="GO" id="GO:0061564">
    <property type="term" value="P:axon development"/>
    <property type="evidence" value="ECO:0000318"/>
    <property type="project" value="GO_Central"/>
</dbReference>
<dbReference type="GO" id="GO:0000266">
    <property type="term" value="P:mitochondrial fission"/>
    <property type="evidence" value="ECO:0000250"/>
    <property type="project" value="UniProtKB"/>
</dbReference>
<dbReference type="GO" id="GO:0090149">
    <property type="term" value="P:mitochondrial membrane fission"/>
    <property type="evidence" value="ECO:0007669"/>
    <property type="project" value="InterPro"/>
</dbReference>
<dbReference type="FunFam" id="1.50.40.10:FF:000057">
    <property type="entry name" value="Solute carrier family 25 member 46"/>
    <property type="match status" value="1"/>
</dbReference>
<dbReference type="FunFam" id="1.50.40.10:FF:000237">
    <property type="entry name" value="Solute carrier family 25 member 46-B"/>
    <property type="match status" value="1"/>
</dbReference>
<dbReference type="Gene3D" id="1.50.40.10">
    <property type="entry name" value="Mitochondrial carrier domain"/>
    <property type="match status" value="2"/>
</dbReference>
<dbReference type="InterPro" id="IPR018108">
    <property type="entry name" value="Mitochondrial_sb/sol_carrier"/>
</dbReference>
<dbReference type="InterPro" id="IPR023395">
    <property type="entry name" value="Mt_carrier_dom_sf"/>
</dbReference>
<dbReference type="InterPro" id="IPR039158">
    <property type="entry name" value="SLC25A46"/>
</dbReference>
<dbReference type="PANTHER" id="PTHR21252:SF2">
    <property type="entry name" value="MITOCHONDRIAL OUTER MEMBRANE PROTEIN SLC25A46"/>
    <property type="match status" value="1"/>
</dbReference>
<dbReference type="PANTHER" id="PTHR21252">
    <property type="entry name" value="TB1 PROTEIN-RELATED"/>
    <property type="match status" value="1"/>
</dbReference>
<dbReference type="Pfam" id="PF00153">
    <property type="entry name" value="Mito_carr"/>
    <property type="match status" value="2"/>
</dbReference>
<dbReference type="SUPFAM" id="SSF103506">
    <property type="entry name" value="Mitochondrial carrier"/>
    <property type="match status" value="1"/>
</dbReference>
<dbReference type="PROSITE" id="PS50920">
    <property type="entry name" value="SOLCAR"/>
    <property type="match status" value="2"/>
</dbReference>
<sequence>MQPRRPDRFDGLEYRGTSWGRGEGDPPPYQSSFPARSFSSSGDLSQHWVTTPPDIPGSRNLHWGDKSPQYGGADSNAGPPAFGEENSNSANSGEQLNRFAGFGIGLASLFTENVLAHPCIVLRRQCQVNYHARNYQLSPFNIVNIMYNFTKTQGLRALWKGMGSTFIVQGISLGAEGILSEFTHLPRELNHKWNPKQIGGHLLLKGLVYVIVTPFYSASLIETVQSEIIHDNPGILDCLKEGMGRVLNLGVPYSKRLLPLLVLTFPTVLHGILHYIVSSTVQKCVLFFIKKKSPPRLPADGSNTVQNKLEDYFPELIANFAASLCADVLLYPLETVLHRLHIQGTRTIIDNTDLGHEVVPINTQYEGLKDCINTIKREEGGLGFYKGFGAVVVQYTLHAIVLQITKIIYSSVVQTSS</sequence>
<name>S246A_XENLA</name>
<evidence type="ECO:0000250" key="1">
    <source>
        <dbReference type="UniProtKB" id="Q96AG3"/>
    </source>
</evidence>
<evidence type="ECO:0000255" key="2"/>
<evidence type="ECO:0000256" key="3">
    <source>
        <dbReference type="SAM" id="MobiDB-lite"/>
    </source>
</evidence>
<evidence type="ECO:0000305" key="4"/>
<reference key="1">
    <citation type="submission" date="2004-06" db="EMBL/GenBank/DDBJ databases">
        <authorList>
            <consortium name="NIH - Xenopus Gene Collection (XGC) project"/>
        </authorList>
    </citation>
    <scope>NUCLEOTIDE SEQUENCE [LARGE SCALE MRNA]</scope>
    <source>
        <tissue>Embryo</tissue>
    </source>
</reference>
<proteinExistence type="evidence at transcript level"/>
<feature type="chain" id="PRO_0000291833" description="Solute carrier family 25 member 46-A">
    <location>
        <begin position="1"/>
        <end position="417"/>
    </location>
</feature>
<feature type="transmembrane region" description="Helical; Name=1" evidence="2">
    <location>
        <begin position="102"/>
        <end position="122"/>
    </location>
</feature>
<feature type="transmembrane region" description="Helical; Name=2" evidence="2">
    <location>
        <begin position="162"/>
        <end position="182"/>
    </location>
</feature>
<feature type="transmembrane region" description="Helical; Name=3" evidence="2">
    <location>
        <begin position="198"/>
        <end position="218"/>
    </location>
</feature>
<feature type="transmembrane region" description="Helical; Name=4" evidence="2">
    <location>
        <begin position="257"/>
        <end position="277"/>
    </location>
</feature>
<feature type="transmembrane region" description="Helical; Name=5" evidence="2">
    <location>
        <begin position="313"/>
        <end position="333"/>
    </location>
</feature>
<feature type="transmembrane region" description="Helical; Name=6" evidence="2">
    <location>
        <begin position="382"/>
        <end position="402"/>
    </location>
</feature>
<feature type="repeat" description="Solcar 1">
    <location>
        <begin position="95"/>
        <end position="186"/>
    </location>
</feature>
<feature type="repeat" description="Solcar 2">
    <location>
        <begin position="310"/>
        <end position="415"/>
    </location>
</feature>
<feature type="region of interest" description="Disordered" evidence="3">
    <location>
        <begin position="1"/>
        <end position="90"/>
    </location>
</feature>
<feature type="compositionally biased region" description="Basic and acidic residues" evidence="3">
    <location>
        <begin position="1"/>
        <end position="13"/>
    </location>
</feature>
<feature type="compositionally biased region" description="Low complexity" evidence="3">
    <location>
        <begin position="31"/>
        <end position="41"/>
    </location>
</feature>
<comment type="function">
    <text evidence="1">May play a role in mitochondrial dynamics by controlling mitochondrial membrane fission.</text>
</comment>
<comment type="subcellular location">
    <subcellularLocation>
        <location evidence="1">Mitochondrion outer membrane</location>
        <topology evidence="2">Multi-pass membrane protein</topology>
    </subcellularLocation>
</comment>
<comment type="similarity">
    <text evidence="4">Belongs to the mitochondrial carrier (TC 2.A.29) family.</text>
</comment>
<gene>
    <name type="primary">slc25a46-a</name>
</gene>
<protein>
    <recommendedName>
        <fullName>Solute carrier family 25 member 46-A</fullName>
    </recommendedName>
</protein>